<dbReference type="EMBL" id="AE014134">
    <property type="protein sequence ID" value="AAF51106.1"/>
    <property type="molecule type" value="Genomic_DNA"/>
</dbReference>
<dbReference type="EMBL" id="AY069793">
    <property type="protein sequence ID" value="AAL39938.1"/>
    <property type="molecule type" value="mRNA"/>
</dbReference>
<dbReference type="RefSeq" id="NP_608780.1">
    <property type="nucleotide sequence ID" value="NM_134936.3"/>
</dbReference>
<dbReference type="SMR" id="Q9VQQ9"/>
<dbReference type="BioGRID" id="59774">
    <property type="interactions" value="62"/>
</dbReference>
<dbReference type="ComplexPortal" id="CPX-2465">
    <property type="entry name" value="Exocyst"/>
</dbReference>
<dbReference type="DIP" id="DIP-17879N"/>
<dbReference type="FunCoup" id="Q9VQQ9">
    <property type="interactions" value="1724"/>
</dbReference>
<dbReference type="IntAct" id="Q9VQQ9">
    <property type="interactions" value="3"/>
</dbReference>
<dbReference type="STRING" id="7227.FBpp0077208"/>
<dbReference type="PaxDb" id="7227-FBpp0077208"/>
<dbReference type="DNASU" id="33563"/>
<dbReference type="EnsemblMetazoa" id="FBtr0077519">
    <property type="protein sequence ID" value="FBpp0077208"/>
    <property type="gene ID" value="FBgn0266670"/>
</dbReference>
<dbReference type="GeneID" id="33563"/>
<dbReference type="KEGG" id="dme:Dmel_CG8843"/>
<dbReference type="UCSC" id="CG8843-RA">
    <property type="organism name" value="d. melanogaster"/>
</dbReference>
<dbReference type="AGR" id="FB:FBgn0266670"/>
<dbReference type="CTD" id="33563"/>
<dbReference type="FlyBase" id="FBgn0266670">
    <property type="gene designation" value="Sec5"/>
</dbReference>
<dbReference type="VEuPathDB" id="VectorBase:FBgn0266670"/>
<dbReference type="eggNOG" id="KOG2347">
    <property type="taxonomic scope" value="Eukaryota"/>
</dbReference>
<dbReference type="GeneTree" id="ENSGT00390000010872"/>
<dbReference type="HOGENOM" id="CLU_005811_1_0_1"/>
<dbReference type="InParanoid" id="Q9VQQ9"/>
<dbReference type="OMA" id="RMWMDVD"/>
<dbReference type="OrthoDB" id="26242at2759"/>
<dbReference type="PhylomeDB" id="Q9VQQ9"/>
<dbReference type="Reactome" id="R-DME-264876">
    <property type="pathway name" value="Insulin processing"/>
</dbReference>
<dbReference type="Reactome" id="R-DME-5620916">
    <property type="pathway name" value="VxPx cargo-targeting to cilium"/>
</dbReference>
<dbReference type="SignaLink" id="Q9VQQ9"/>
<dbReference type="BioGRID-ORCS" id="33563">
    <property type="hits" value="0 hits in 1 CRISPR screen"/>
</dbReference>
<dbReference type="GenomeRNAi" id="33563"/>
<dbReference type="PRO" id="PR:Q9VQQ9"/>
<dbReference type="Proteomes" id="UP000000803">
    <property type="component" value="Chromosome 2L"/>
</dbReference>
<dbReference type="Bgee" id="FBgn0266670">
    <property type="expression patterns" value="Expressed in adult abdominal pericardial cell (Drosophila) in dorsal vessel heart and 75 other cell types or tissues"/>
</dbReference>
<dbReference type="GO" id="GO:0005642">
    <property type="term" value="C:annulate lamellae"/>
    <property type="evidence" value="ECO:0000314"/>
    <property type="project" value="FlyBase"/>
</dbReference>
<dbReference type="GO" id="GO:1904115">
    <property type="term" value="C:axon cytoplasm"/>
    <property type="evidence" value="ECO:0007669"/>
    <property type="project" value="GOC"/>
</dbReference>
<dbReference type="GO" id="GO:0005938">
    <property type="term" value="C:cell cortex"/>
    <property type="evidence" value="ECO:0000314"/>
    <property type="project" value="FlyBase"/>
</dbReference>
<dbReference type="GO" id="GO:0030136">
    <property type="term" value="C:clathrin-coated vesicle"/>
    <property type="evidence" value="ECO:0000314"/>
    <property type="project" value="FlyBase"/>
</dbReference>
<dbReference type="GO" id="GO:0005737">
    <property type="term" value="C:cytoplasm"/>
    <property type="evidence" value="ECO:0000314"/>
    <property type="project" value="FlyBase"/>
</dbReference>
<dbReference type="GO" id="GO:0000145">
    <property type="term" value="C:exocyst"/>
    <property type="evidence" value="ECO:0000314"/>
    <property type="project" value="FlyBase"/>
</dbReference>
<dbReference type="GO" id="GO:0031594">
    <property type="term" value="C:neuromuscular junction"/>
    <property type="evidence" value="ECO:0000314"/>
    <property type="project" value="SynGO"/>
</dbReference>
<dbReference type="GO" id="GO:0005886">
    <property type="term" value="C:plasma membrane"/>
    <property type="evidence" value="ECO:0000314"/>
    <property type="project" value="FlyBase"/>
</dbReference>
<dbReference type="GO" id="GO:0098793">
    <property type="term" value="C:presynapse"/>
    <property type="evidence" value="ECO:0007669"/>
    <property type="project" value="GOC"/>
</dbReference>
<dbReference type="GO" id="GO:0055037">
    <property type="term" value="C:recycling endosome"/>
    <property type="evidence" value="ECO:0000314"/>
    <property type="project" value="FlyBase"/>
</dbReference>
<dbReference type="GO" id="GO:0016028">
    <property type="term" value="C:rhabdomere"/>
    <property type="evidence" value="ECO:0000314"/>
    <property type="project" value="FlyBase"/>
</dbReference>
<dbReference type="GO" id="GO:0035003">
    <property type="term" value="C:subapical complex"/>
    <property type="evidence" value="ECO:0000314"/>
    <property type="project" value="FlyBase"/>
</dbReference>
<dbReference type="GO" id="GO:0031267">
    <property type="term" value="F:small GTPase binding"/>
    <property type="evidence" value="ECO:0000353"/>
    <property type="project" value="FlyBase"/>
</dbReference>
<dbReference type="GO" id="GO:0099641">
    <property type="term" value="P:anterograde axonal protein transport"/>
    <property type="evidence" value="ECO:0000314"/>
    <property type="project" value="SynGO"/>
</dbReference>
<dbReference type="GO" id="GO:0007298">
    <property type="term" value="P:border follicle cell migration"/>
    <property type="evidence" value="ECO:0000315"/>
    <property type="project" value="FlyBase"/>
</dbReference>
<dbReference type="GO" id="GO:0035147">
    <property type="term" value="P:branch fusion, open tracheal system"/>
    <property type="evidence" value="ECO:0000315"/>
    <property type="project" value="FlyBase"/>
</dbReference>
<dbReference type="GO" id="GO:0007349">
    <property type="term" value="P:cellularization"/>
    <property type="evidence" value="ECO:0000315"/>
    <property type="project" value="FlyBase"/>
</dbReference>
<dbReference type="GO" id="GO:0032456">
    <property type="term" value="P:endocytic recycling"/>
    <property type="evidence" value="ECO:0000315"/>
    <property type="project" value="FlyBase"/>
</dbReference>
<dbReference type="GO" id="GO:0006887">
    <property type="term" value="P:exocytosis"/>
    <property type="evidence" value="ECO:0000318"/>
    <property type="project" value="GO_Central"/>
</dbReference>
<dbReference type="GO" id="GO:0043001">
    <property type="term" value="P:Golgi to plasma membrane protein transport"/>
    <property type="evidence" value="ECO:0000315"/>
    <property type="project" value="FlyBase"/>
</dbReference>
<dbReference type="GO" id="GO:0006893">
    <property type="term" value="P:Golgi to plasma membrane transport"/>
    <property type="evidence" value="ECO:0000315"/>
    <property type="project" value="FlyBase"/>
</dbReference>
<dbReference type="GO" id="GO:0045087">
    <property type="term" value="P:innate immune response"/>
    <property type="evidence" value="ECO:0000314"/>
    <property type="project" value="FlyBase"/>
</dbReference>
<dbReference type="GO" id="GO:0007269">
    <property type="term" value="P:neurotransmitter secretion"/>
    <property type="evidence" value="ECO:0000303"/>
    <property type="project" value="FlyBase"/>
</dbReference>
<dbReference type="GO" id="GO:0048599">
    <property type="term" value="P:oocyte development"/>
    <property type="evidence" value="ECO:0000315"/>
    <property type="project" value="FlyBase"/>
</dbReference>
<dbReference type="GO" id="GO:0048215">
    <property type="term" value="P:positive regulation of Golgi vesicle fusion to target membrane"/>
    <property type="evidence" value="ECO:0000315"/>
    <property type="project" value="FlyBase"/>
</dbReference>
<dbReference type="GO" id="GO:0071896">
    <property type="term" value="P:protein localization to adherens junction"/>
    <property type="evidence" value="ECO:0000315"/>
    <property type="project" value="FlyBase"/>
</dbReference>
<dbReference type="GO" id="GO:0072697">
    <property type="term" value="P:protein localization to cell cortex"/>
    <property type="evidence" value="ECO:0000315"/>
    <property type="project" value="FlyBase"/>
</dbReference>
<dbReference type="GO" id="GO:0072657">
    <property type="term" value="P:protein localization to membrane"/>
    <property type="evidence" value="ECO:0000314"/>
    <property type="project" value="FlyBase"/>
</dbReference>
<dbReference type="GO" id="GO:0072659">
    <property type="term" value="P:protein localization to plasma membrane"/>
    <property type="evidence" value="ECO:0000315"/>
    <property type="project" value="FlyBase"/>
</dbReference>
<dbReference type="GO" id="GO:0090128">
    <property type="term" value="P:regulation of synapse maturation"/>
    <property type="evidence" value="ECO:0000314"/>
    <property type="project" value="SynGO"/>
</dbReference>
<dbReference type="GO" id="GO:0016081">
    <property type="term" value="P:synaptic vesicle docking"/>
    <property type="evidence" value="ECO:0000303"/>
    <property type="project" value="FlyBase"/>
</dbReference>
<dbReference type="GO" id="GO:0016080">
    <property type="term" value="P:synaptic vesicle targeting"/>
    <property type="evidence" value="ECO:0000303"/>
    <property type="project" value="FlyBase"/>
</dbReference>
<dbReference type="GO" id="GO:0045056">
    <property type="term" value="P:transcytosis"/>
    <property type="evidence" value="ECO:0000315"/>
    <property type="project" value="FlyBase"/>
</dbReference>
<dbReference type="GO" id="GO:0016192">
    <property type="term" value="P:vesicle-mediated transport"/>
    <property type="evidence" value="ECO:0000315"/>
    <property type="project" value="FlyBase"/>
</dbReference>
<dbReference type="CDD" id="cd00603">
    <property type="entry name" value="IPT_PCSR"/>
    <property type="match status" value="1"/>
</dbReference>
<dbReference type="FunFam" id="2.60.40.10:FF:000196">
    <property type="entry name" value="Exocyst complex component 2"/>
    <property type="match status" value="1"/>
</dbReference>
<dbReference type="Gene3D" id="2.60.40.10">
    <property type="entry name" value="Immunoglobulins"/>
    <property type="match status" value="1"/>
</dbReference>
<dbReference type="InterPro" id="IPR029175">
    <property type="entry name" value="EXOC2/Sec5"/>
</dbReference>
<dbReference type="InterPro" id="IPR039481">
    <property type="entry name" value="EXOC2/Sec5_N_dom"/>
</dbReference>
<dbReference type="InterPro" id="IPR013783">
    <property type="entry name" value="Ig-like_fold"/>
</dbReference>
<dbReference type="InterPro" id="IPR014756">
    <property type="entry name" value="Ig_E-set"/>
</dbReference>
<dbReference type="InterPro" id="IPR002909">
    <property type="entry name" value="IPT_dom"/>
</dbReference>
<dbReference type="PANTHER" id="PTHR13043:SF1">
    <property type="entry name" value="EXOCYST COMPLEX COMPONENT 2"/>
    <property type="match status" value="1"/>
</dbReference>
<dbReference type="PANTHER" id="PTHR13043">
    <property type="entry name" value="EXOCYST COMPLEX COMPONENT SEC5"/>
    <property type="match status" value="1"/>
</dbReference>
<dbReference type="Pfam" id="PF15469">
    <property type="entry name" value="Sec5"/>
    <property type="match status" value="1"/>
</dbReference>
<dbReference type="Pfam" id="PF01833">
    <property type="entry name" value="TIG"/>
    <property type="match status" value="1"/>
</dbReference>
<dbReference type="SUPFAM" id="SSF81296">
    <property type="entry name" value="E set domains"/>
    <property type="match status" value="1"/>
</dbReference>
<sequence>MAPQPVVTGLSPKEGPPGTRVIIRGEFLGTRVQDLIGLKICGSDCLLSAEWKSPNKIIARTGPAKGKGDIIVTTLSGGVGTSTVQFRAYHETIGPLKESAVWIEESPSQNFAWGRRTLAQSGLTQEDPLGLSIEGNEQKIPEDLRDLFPEACGDLSQEHFSPAWFLLENHLATSFEDLKAGLSYLKRKVESQKEGQLSFLKSNAGSVIDQLDTLMNIRDKLQEDVKLHGNETLNILETSIENSISESQKIFTDVLVRKEKADSTRSVLFALSRHKFLFCLPNSVDRRAKAGEYDIVVNDYSRAKNLFGKTEIPIFRKVLEEVDHRILSIRKQLHEKVVKMPQSVEQQKKLIKALISLELQQSGTPIGDKLRNIDPAWDAIEARAKYLEWTFRQTFDQHTSKDSGAQEKAKNRDSSQAPNRVNFCEELCDIAASQLPDLWRLGQLYFTGELRGPHDPKPGDFKRMVLNAIEKFCVYLRLAILIATDQRALRQSSGLAWPIGSASATHQFLPWIPQCLRFTRIAYATLISLDLPSEALDIIQKLIDEVRLFCFSIIFKRATDRCKKLGSQETWELGVEEYPGATLLPAALETLLIETLDEVQSVCMQRETREGNLLEPQSDGQREVTQRLQEFLSAFSAVIEELAFHSHDEETPTHNVSQLLGFPNAQQPDSVAGSGGAAAVTWEQRMLCCLANYAYCNKIFFPRLGDIFVRYGYPLPTLAIETARYTVNQLFTNLLEEYVEHKGDPLVGTIEPSMYLGRFQWDHEMEIGQLRPYAHECCDNLVGVYSEIYSISPALLRPILESIVQTISEELARLMSCVQRFSFTGAIQAHVDIRLLRDSLEGYVNETAKNYFMEALEAINPPLSGEQKRKADEILERVKRNMRLQLLCFSVKDP</sequence>
<accession>Q9VQQ9</accession>
<keyword id="KW-0268">Exocytosis</keyword>
<keyword id="KW-0653">Protein transport</keyword>
<keyword id="KW-1185">Reference proteome</keyword>
<keyword id="KW-0813">Transport</keyword>
<reference key="1">
    <citation type="journal article" date="2000" name="Science">
        <title>The genome sequence of Drosophila melanogaster.</title>
        <authorList>
            <person name="Adams M.D."/>
            <person name="Celniker S.E."/>
            <person name="Holt R.A."/>
            <person name="Evans C.A."/>
            <person name="Gocayne J.D."/>
            <person name="Amanatides P.G."/>
            <person name="Scherer S.E."/>
            <person name="Li P.W."/>
            <person name="Hoskins R.A."/>
            <person name="Galle R.F."/>
            <person name="George R.A."/>
            <person name="Lewis S.E."/>
            <person name="Richards S."/>
            <person name="Ashburner M."/>
            <person name="Henderson S.N."/>
            <person name="Sutton G.G."/>
            <person name="Wortman J.R."/>
            <person name="Yandell M.D."/>
            <person name="Zhang Q."/>
            <person name="Chen L.X."/>
            <person name="Brandon R.C."/>
            <person name="Rogers Y.-H.C."/>
            <person name="Blazej R.G."/>
            <person name="Champe M."/>
            <person name="Pfeiffer B.D."/>
            <person name="Wan K.H."/>
            <person name="Doyle C."/>
            <person name="Baxter E.G."/>
            <person name="Helt G."/>
            <person name="Nelson C.R."/>
            <person name="Miklos G.L.G."/>
            <person name="Abril J.F."/>
            <person name="Agbayani A."/>
            <person name="An H.-J."/>
            <person name="Andrews-Pfannkoch C."/>
            <person name="Baldwin D."/>
            <person name="Ballew R.M."/>
            <person name="Basu A."/>
            <person name="Baxendale J."/>
            <person name="Bayraktaroglu L."/>
            <person name="Beasley E.M."/>
            <person name="Beeson K.Y."/>
            <person name="Benos P.V."/>
            <person name="Berman B.P."/>
            <person name="Bhandari D."/>
            <person name="Bolshakov S."/>
            <person name="Borkova D."/>
            <person name="Botchan M.R."/>
            <person name="Bouck J."/>
            <person name="Brokstein P."/>
            <person name="Brottier P."/>
            <person name="Burtis K.C."/>
            <person name="Busam D.A."/>
            <person name="Butler H."/>
            <person name="Cadieu E."/>
            <person name="Center A."/>
            <person name="Chandra I."/>
            <person name="Cherry J.M."/>
            <person name="Cawley S."/>
            <person name="Dahlke C."/>
            <person name="Davenport L.B."/>
            <person name="Davies P."/>
            <person name="de Pablos B."/>
            <person name="Delcher A."/>
            <person name="Deng Z."/>
            <person name="Mays A.D."/>
            <person name="Dew I."/>
            <person name="Dietz S.M."/>
            <person name="Dodson K."/>
            <person name="Doup L.E."/>
            <person name="Downes M."/>
            <person name="Dugan-Rocha S."/>
            <person name="Dunkov B.C."/>
            <person name="Dunn P."/>
            <person name="Durbin K.J."/>
            <person name="Evangelista C.C."/>
            <person name="Ferraz C."/>
            <person name="Ferriera S."/>
            <person name="Fleischmann W."/>
            <person name="Fosler C."/>
            <person name="Gabrielian A.E."/>
            <person name="Garg N.S."/>
            <person name="Gelbart W.M."/>
            <person name="Glasser K."/>
            <person name="Glodek A."/>
            <person name="Gong F."/>
            <person name="Gorrell J.H."/>
            <person name="Gu Z."/>
            <person name="Guan P."/>
            <person name="Harris M."/>
            <person name="Harris N.L."/>
            <person name="Harvey D.A."/>
            <person name="Heiman T.J."/>
            <person name="Hernandez J.R."/>
            <person name="Houck J."/>
            <person name="Hostin D."/>
            <person name="Houston K.A."/>
            <person name="Howland T.J."/>
            <person name="Wei M.-H."/>
            <person name="Ibegwam C."/>
            <person name="Jalali M."/>
            <person name="Kalush F."/>
            <person name="Karpen G.H."/>
            <person name="Ke Z."/>
            <person name="Kennison J.A."/>
            <person name="Ketchum K.A."/>
            <person name="Kimmel B.E."/>
            <person name="Kodira C.D."/>
            <person name="Kraft C.L."/>
            <person name="Kravitz S."/>
            <person name="Kulp D."/>
            <person name="Lai Z."/>
            <person name="Lasko P."/>
            <person name="Lei Y."/>
            <person name="Levitsky A.A."/>
            <person name="Li J.H."/>
            <person name="Li Z."/>
            <person name="Liang Y."/>
            <person name="Lin X."/>
            <person name="Liu X."/>
            <person name="Mattei B."/>
            <person name="McIntosh T.C."/>
            <person name="McLeod M.P."/>
            <person name="McPherson D."/>
            <person name="Merkulov G."/>
            <person name="Milshina N.V."/>
            <person name="Mobarry C."/>
            <person name="Morris J."/>
            <person name="Moshrefi A."/>
            <person name="Mount S.M."/>
            <person name="Moy M."/>
            <person name="Murphy B."/>
            <person name="Murphy L."/>
            <person name="Muzny D.M."/>
            <person name="Nelson D.L."/>
            <person name="Nelson D.R."/>
            <person name="Nelson K.A."/>
            <person name="Nixon K."/>
            <person name="Nusskern D.R."/>
            <person name="Pacleb J.M."/>
            <person name="Palazzolo M."/>
            <person name="Pittman G.S."/>
            <person name="Pan S."/>
            <person name="Pollard J."/>
            <person name="Puri V."/>
            <person name="Reese M.G."/>
            <person name="Reinert K."/>
            <person name="Remington K."/>
            <person name="Saunders R.D.C."/>
            <person name="Scheeler F."/>
            <person name="Shen H."/>
            <person name="Shue B.C."/>
            <person name="Siden-Kiamos I."/>
            <person name="Simpson M."/>
            <person name="Skupski M.P."/>
            <person name="Smith T.J."/>
            <person name="Spier E."/>
            <person name="Spradling A.C."/>
            <person name="Stapleton M."/>
            <person name="Strong R."/>
            <person name="Sun E."/>
            <person name="Svirskas R."/>
            <person name="Tector C."/>
            <person name="Turner R."/>
            <person name="Venter E."/>
            <person name="Wang A.H."/>
            <person name="Wang X."/>
            <person name="Wang Z.-Y."/>
            <person name="Wassarman D.A."/>
            <person name="Weinstock G.M."/>
            <person name="Weissenbach J."/>
            <person name="Williams S.M."/>
            <person name="Woodage T."/>
            <person name="Worley K.C."/>
            <person name="Wu D."/>
            <person name="Yang S."/>
            <person name="Yao Q.A."/>
            <person name="Ye J."/>
            <person name="Yeh R.-F."/>
            <person name="Zaveri J.S."/>
            <person name="Zhan M."/>
            <person name="Zhang G."/>
            <person name="Zhao Q."/>
            <person name="Zheng L."/>
            <person name="Zheng X.H."/>
            <person name="Zhong F.N."/>
            <person name="Zhong W."/>
            <person name="Zhou X."/>
            <person name="Zhu S.C."/>
            <person name="Zhu X."/>
            <person name="Smith H.O."/>
            <person name="Gibbs R.A."/>
            <person name="Myers E.W."/>
            <person name="Rubin G.M."/>
            <person name="Venter J.C."/>
        </authorList>
    </citation>
    <scope>NUCLEOTIDE SEQUENCE [LARGE SCALE GENOMIC DNA]</scope>
    <source>
        <strain>Berkeley</strain>
    </source>
</reference>
<reference key="2">
    <citation type="journal article" date="2002" name="Genome Biol.">
        <title>Annotation of the Drosophila melanogaster euchromatic genome: a systematic review.</title>
        <authorList>
            <person name="Misra S."/>
            <person name="Crosby M.A."/>
            <person name="Mungall C.J."/>
            <person name="Matthews B.B."/>
            <person name="Campbell K.S."/>
            <person name="Hradecky P."/>
            <person name="Huang Y."/>
            <person name="Kaminker J.S."/>
            <person name="Millburn G.H."/>
            <person name="Prochnik S.E."/>
            <person name="Smith C.D."/>
            <person name="Tupy J.L."/>
            <person name="Whitfield E.J."/>
            <person name="Bayraktaroglu L."/>
            <person name="Berman B.P."/>
            <person name="Bettencourt B.R."/>
            <person name="Celniker S.E."/>
            <person name="de Grey A.D.N.J."/>
            <person name="Drysdale R.A."/>
            <person name="Harris N.L."/>
            <person name="Richter J."/>
            <person name="Russo S."/>
            <person name="Schroeder A.J."/>
            <person name="Shu S.Q."/>
            <person name="Stapleton M."/>
            <person name="Yamada C."/>
            <person name="Ashburner M."/>
            <person name="Gelbart W.M."/>
            <person name="Rubin G.M."/>
            <person name="Lewis S.E."/>
        </authorList>
    </citation>
    <scope>GENOME REANNOTATION</scope>
    <source>
        <strain>Berkeley</strain>
    </source>
</reference>
<reference key="3">
    <citation type="journal article" date="2002" name="Genome Biol.">
        <title>A Drosophila full-length cDNA resource.</title>
        <authorList>
            <person name="Stapleton M."/>
            <person name="Carlson J.W."/>
            <person name="Brokstein P."/>
            <person name="Yu C."/>
            <person name="Champe M."/>
            <person name="George R.A."/>
            <person name="Guarin H."/>
            <person name="Kronmiller B."/>
            <person name="Pacleb J.M."/>
            <person name="Park S."/>
            <person name="Wan K.H."/>
            <person name="Rubin G.M."/>
            <person name="Celniker S.E."/>
        </authorList>
    </citation>
    <scope>NUCLEOTIDE SEQUENCE [LARGE SCALE MRNA]</scope>
    <source>
        <strain>Berkeley</strain>
        <tissue>Embryo</tissue>
    </source>
</reference>
<name>EXOC2_DROME</name>
<organism>
    <name type="scientific">Drosophila melanogaster</name>
    <name type="common">Fruit fly</name>
    <dbReference type="NCBI Taxonomy" id="7227"/>
    <lineage>
        <taxon>Eukaryota</taxon>
        <taxon>Metazoa</taxon>
        <taxon>Ecdysozoa</taxon>
        <taxon>Arthropoda</taxon>
        <taxon>Hexapoda</taxon>
        <taxon>Insecta</taxon>
        <taxon>Pterygota</taxon>
        <taxon>Neoptera</taxon>
        <taxon>Endopterygota</taxon>
        <taxon>Diptera</taxon>
        <taxon>Brachycera</taxon>
        <taxon>Muscomorpha</taxon>
        <taxon>Ephydroidea</taxon>
        <taxon>Drosophilidae</taxon>
        <taxon>Drosophila</taxon>
        <taxon>Sophophora</taxon>
    </lineage>
</organism>
<evidence type="ECO:0000250" key="1">
    <source>
        <dbReference type="UniProtKB" id="O54921"/>
    </source>
</evidence>
<evidence type="ECO:0000250" key="2">
    <source>
        <dbReference type="UniProtKB" id="Q96KP1"/>
    </source>
</evidence>
<evidence type="ECO:0000256" key="3">
    <source>
        <dbReference type="SAM" id="MobiDB-lite"/>
    </source>
</evidence>
<evidence type="ECO:0000305" key="4"/>
<evidence type="ECO:0000312" key="5">
    <source>
        <dbReference type="FlyBase" id="FBgn0266670"/>
    </source>
</evidence>
<gene>
    <name evidence="5" type="primary">Sec5</name>
    <name evidence="5" type="ORF">CG8843</name>
</gene>
<proteinExistence type="evidence at transcript level"/>
<comment type="function">
    <text evidence="2">Component of the exocyst complex involved in the docking of exocytic vesicles with fusion sites on the plasma membrane.</text>
</comment>
<comment type="subunit">
    <text evidence="1">The exocyst complex is composed of Sec3/Exoc1, Sec5/Exoc2, Sec6/Exoc3, Sec8/Exoc4, Sec10/Exoc5, Sec15/Exoc6, Exo70/Exoc7 and Exo84/Exoc8.</text>
</comment>
<comment type="similarity">
    <text evidence="4">Belongs to the SEC5 family.</text>
</comment>
<protein>
    <recommendedName>
        <fullName>Exocyst complex component 2</fullName>
    </recommendedName>
    <alternativeName>
        <fullName>Exocyst complex component Sec5</fullName>
    </alternativeName>
</protein>
<feature type="chain" id="PRO_0000118922" description="Exocyst complex component 2">
    <location>
        <begin position="1"/>
        <end position="894"/>
    </location>
</feature>
<feature type="domain" description="IPT/TIG">
    <location>
        <begin position="5"/>
        <end position="89"/>
    </location>
</feature>
<feature type="region of interest" description="Disordered" evidence="3">
    <location>
        <begin position="398"/>
        <end position="417"/>
    </location>
</feature>
<feature type="compositionally biased region" description="Basic and acidic residues" evidence="3">
    <location>
        <begin position="398"/>
        <end position="413"/>
    </location>
</feature>